<name>NDC80_ENCCU</name>
<organism>
    <name type="scientific">Encephalitozoon cuniculi (strain GB-M1)</name>
    <name type="common">Microsporidian parasite</name>
    <dbReference type="NCBI Taxonomy" id="284813"/>
    <lineage>
        <taxon>Eukaryota</taxon>
        <taxon>Fungi</taxon>
        <taxon>Fungi incertae sedis</taxon>
        <taxon>Microsporidia</taxon>
        <taxon>Unikaryonidae</taxon>
        <taxon>Encephalitozoon</taxon>
    </lineage>
</organism>
<gene>
    <name type="primary">NDC80</name>
    <name type="ordered locus">ECU10_0810</name>
</gene>
<accession>Q8SUE9</accession>
<sequence>MTRRFTMTPNSRNPVKTPVSGMKVAPFPRHSIATEEVRRRDMRVVREKGYRQQCVDGILRFLVENGYDGQVSQKILHNPSSKDFQSIFKFLYGFVDDFTFSSRFEDEVVNVMKNLKYPYCGEITKSQLSAITPHTWPVILSMCSWLVDLISHGTSLLQQEEERSVESCFFEYVCDGYMRFMEGDEDDTALEEEFERRVTEIYTGIFKEIDRKKEELRRIEEMISEARKMSEGREELDRKKRELTDDLNMLIASEKQLEGKKRKYLGAISRLSEEIVKVEEEIESLRAQEDGLRAQITKQRINPEDVKEMNAEKIELFKELERMKPEKESLMKVVGEQEREAQERAEEVEKLFFDLKGLRDEISLRIVKDGKGVPRVANEVSGEVFSGMSGVIVRLEEELNSKSDVLVTAEMNKSILEEARGEKESITSELNSRLGYYSDKLVMAGKLYLEKKEISENEQRKSKTEMELLENELLKLNLESNTSLLMSEQKLQKARIVLDRTLNSINYEREEINKMIFGFYNAAMDIHASIQSQVGDLRALLNK</sequence>
<feature type="chain" id="PRO_0000246639" description="Probable kinetochore protein NDC80">
    <location>
        <begin position="1"/>
        <end position="543"/>
    </location>
</feature>
<feature type="region of interest" description="Disordered" evidence="3">
    <location>
        <begin position="1"/>
        <end position="20"/>
    </location>
</feature>
<feature type="coiled-coil region" evidence="2">
    <location>
        <begin position="203"/>
        <end position="356"/>
    </location>
</feature>
<feature type="coiled-coil region" evidence="2">
    <location>
        <begin position="450"/>
        <end position="483"/>
    </location>
</feature>
<feature type="compositionally biased region" description="Polar residues" evidence="3">
    <location>
        <begin position="1"/>
        <end position="14"/>
    </location>
</feature>
<reference key="1">
    <citation type="journal article" date="2001" name="Nature">
        <title>Genome sequence and gene compaction of the eukaryote parasite Encephalitozoon cuniculi.</title>
        <authorList>
            <person name="Katinka M.D."/>
            <person name="Duprat S."/>
            <person name="Cornillot E."/>
            <person name="Metenier G."/>
            <person name="Thomarat F."/>
            <person name="Prensier G."/>
            <person name="Barbe V."/>
            <person name="Peyretaillade E."/>
            <person name="Brottier P."/>
            <person name="Wincker P."/>
            <person name="Delbac F."/>
            <person name="El Alaoui H."/>
            <person name="Peyret P."/>
            <person name="Saurin W."/>
            <person name="Gouy M."/>
            <person name="Weissenbach J."/>
            <person name="Vivares C.P."/>
        </authorList>
    </citation>
    <scope>NUCLEOTIDE SEQUENCE [LARGE SCALE GENOMIC DNA]</scope>
    <source>
        <strain>GB-M1</strain>
    </source>
</reference>
<protein>
    <recommendedName>
        <fullName>Probable kinetochore protein NDC80</fullName>
    </recommendedName>
</protein>
<evidence type="ECO:0000250" key="1"/>
<evidence type="ECO:0000255" key="2"/>
<evidence type="ECO:0000256" key="3">
    <source>
        <dbReference type="SAM" id="MobiDB-lite"/>
    </source>
</evidence>
<evidence type="ECO:0000305" key="4"/>
<keyword id="KW-0131">Cell cycle</keyword>
<keyword id="KW-0132">Cell division</keyword>
<keyword id="KW-0137">Centromere</keyword>
<keyword id="KW-0158">Chromosome</keyword>
<keyword id="KW-0175">Coiled coil</keyword>
<keyword id="KW-0995">Kinetochore</keyword>
<keyword id="KW-0498">Mitosis</keyword>
<keyword id="KW-0539">Nucleus</keyword>
<keyword id="KW-1185">Reference proteome</keyword>
<comment type="function">
    <text evidence="1">Acts as a component of the essential kinetochore-associated NDC80 complex, which is required for chromosome segregation and spindle checkpoint activity.</text>
</comment>
<comment type="subunit">
    <text evidence="1">Component of the NDC80 complex, which consists of at least NDC80 and NUF2.</text>
</comment>
<comment type="subcellular location">
    <subcellularLocation>
        <location evidence="1">Nucleus</location>
    </subcellularLocation>
    <subcellularLocation>
        <location evidence="1">Chromosome</location>
        <location evidence="1">Centromere</location>
        <location evidence="1">Kinetochore</location>
    </subcellularLocation>
    <text evidence="1">Associated with kinetochores.</text>
</comment>
<comment type="similarity">
    <text evidence="4">Belongs to the NDC80/HEC1 family.</text>
</comment>
<dbReference type="EMBL" id="AL590449">
    <property type="protein sequence ID" value="CAD25800.1"/>
    <property type="molecule type" value="Genomic_DNA"/>
</dbReference>
<dbReference type="RefSeq" id="NP_586196.1">
    <property type="nucleotide sequence ID" value="NM_001042029.1"/>
</dbReference>
<dbReference type="SMR" id="Q8SUE9"/>
<dbReference type="FunCoup" id="Q8SUE9">
    <property type="interactions" value="109"/>
</dbReference>
<dbReference type="STRING" id="284813.Q8SUE9"/>
<dbReference type="GeneID" id="859845"/>
<dbReference type="KEGG" id="ecu:ECU10_0810"/>
<dbReference type="VEuPathDB" id="MicrosporidiaDB:ECU10_0810"/>
<dbReference type="HOGENOM" id="CLU_012583_1_0_1"/>
<dbReference type="InParanoid" id="Q8SUE9"/>
<dbReference type="OMA" id="PSHKFQK"/>
<dbReference type="OrthoDB" id="7459479at2759"/>
<dbReference type="Proteomes" id="UP000000819">
    <property type="component" value="Chromosome X"/>
</dbReference>
<dbReference type="GO" id="GO:0031262">
    <property type="term" value="C:Ndc80 complex"/>
    <property type="evidence" value="ECO:0000250"/>
    <property type="project" value="UniProtKB"/>
</dbReference>
<dbReference type="GO" id="GO:0005634">
    <property type="term" value="C:nucleus"/>
    <property type="evidence" value="ECO:0007669"/>
    <property type="project" value="UniProtKB-SubCell"/>
</dbReference>
<dbReference type="GO" id="GO:0008017">
    <property type="term" value="F:microtubule binding"/>
    <property type="evidence" value="ECO:0000250"/>
    <property type="project" value="UniProtKB"/>
</dbReference>
<dbReference type="GO" id="GO:0051301">
    <property type="term" value="P:cell division"/>
    <property type="evidence" value="ECO:0007669"/>
    <property type="project" value="UniProtKB-KW"/>
</dbReference>
<dbReference type="GO" id="GO:1990758">
    <property type="term" value="P:mitotic sister chromatid biorientation"/>
    <property type="evidence" value="ECO:0000250"/>
    <property type="project" value="UniProtKB"/>
</dbReference>
<dbReference type="Gene3D" id="1.10.418.30">
    <property type="entry name" value="Ncd80 complex, Ncd80 subunit"/>
    <property type="match status" value="1"/>
</dbReference>
<dbReference type="InterPro" id="IPR005550">
    <property type="entry name" value="Kinetochore_Ndc80"/>
</dbReference>
<dbReference type="InterPro" id="IPR055260">
    <property type="entry name" value="Ndc80_CH"/>
</dbReference>
<dbReference type="InterPro" id="IPR038273">
    <property type="entry name" value="Ndc80_sf"/>
</dbReference>
<dbReference type="PANTHER" id="PTHR10643">
    <property type="entry name" value="KINETOCHORE PROTEIN NDC80"/>
    <property type="match status" value="1"/>
</dbReference>
<dbReference type="PANTHER" id="PTHR10643:SF2">
    <property type="entry name" value="KINETOCHORE PROTEIN NDC80 HOMOLOG"/>
    <property type="match status" value="1"/>
</dbReference>
<dbReference type="Pfam" id="PF03801">
    <property type="entry name" value="Ndc80_HEC"/>
    <property type="match status" value="1"/>
</dbReference>
<proteinExistence type="inferred from homology"/>